<dbReference type="EC" id="2.7.1.33" evidence="1"/>
<dbReference type="EMBL" id="CP000251">
    <property type="protein sequence ID" value="ABC82157.1"/>
    <property type="molecule type" value="Genomic_DNA"/>
</dbReference>
<dbReference type="RefSeq" id="WP_011421439.1">
    <property type="nucleotide sequence ID" value="NC_007760.1"/>
</dbReference>
<dbReference type="SMR" id="Q2IKH9"/>
<dbReference type="STRING" id="290397.Adeh_2387"/>
<dbReference type="KEGG" id="ade:Adeh_2387"/>
<dbReference type="eggNOG" id="COG1521">
    <property type="taxonomic scope" value="Bacteria"/>
</dbReference>
<dbReference type="HOGENOM" id="CLU_066627_1_0_7"/>
<dbReference type="OrthoDB" id="9804707at2"/>
<dbReference type="UniPathway" id="UPA00241">
    <property type="reaction ID" value="UER00352"/>
</dbReference>
<dbReference type="Proteomes" id="UP000001935">
    <property type="component" value="Chromosome"/>
</dbReference>
<dbReference type="GO" id="GO:0005737">
    <property type="term" value="C:cytoplasm"/>
    <property type="evidence" value="ECO:0007669"/>
    <property type="project" value="UniProtKB-SubCell"/>
</dbReference>
<dbReference type="GO" id="GO:0005524">
    <property type="term" value="F:ATP binding"/>
    <property type="evidence" value="ECO:0007669"/>
    <property type="project" value="UniProtKB-UniRule"/>
</dbReference>
<dbReference type="GO" id="GO:0046872">
    <property type="term" value="F:metal ion binding"/>
    <property type="evidence" value="ECO:0007669"/>
    <property type="project" value="UniProtKB-KW"/>
</dbReference>
<dbReference type="GO" id="GO:0004594">
    <property type="term" value="F:pantothenate kinase activity"/>
    <property type="evidence" value="ECO:0007669"/>
    <property type="project" value="UniProtKB-UniRule"/>
</dbReference>
<dbReference type="GO" id="GO:0015937">
    <property type="term" value="P:coenzyme A biosynthetic process"/>
    <property type="evidence" value="ECO:0007669"/>
    <property type="project" value="UniProtKB-UniRule"/>
</dbReference>
<dbReference type="CDD" id="cd24015">
    <property type="entry name" value="ASKHA_NBD_PanK-III"/>
    <property type="match status" value="1"/>
</dbReference>
<dbReference type="Gene3D" id="3.30.420.40">
    <property type="match status" value="2"/>
</dbReference>
<dbReference type="HAMAP" id="MF_01274">
    <property type="entry name" value="Pantothen_kinase_3"/>
    <property type="match status" value="1"/>
</dbReference>
<dbReference type="InterPro" id="IPR043129">
    <property type="entry name" value="ATPase_NBD"/>
</dbReference>
<dbReference type="InterPro" id="IPR004619">
    <property type="entry name" value="Type_III_PanK"/>
</dbReference>
<dbReference type="NCBIfam" id="TIGR00671">
    <property type="entry name" value="baf"/>
    <property type="match status" value="1"/>
</dbReference>
<dbReference type="NCBIfam" id="NF009848">
    <property type="entry name" value="PRK13318.1-6"/>
    <property type="match status" value="1"/>
</dbReference>
<dbReference type="NCBIfam" id="NF009855">
    <property type="entry name" value="PRK13321.1"/>
    <property type="match status" value="1"/>
</dbReference>
<dbReference type="PANTHER" id="PTHR34265">
    <property type="entry name" value="TYPE III PANTOTHENATE KINASE"/>
    <property type="match status" value="1"/>
</dbReference>
<dbReference type="PANTHER" id="PTHR34265:SF1">
    <property type="entry name" value="TYPE III PANTOTHENATE KINASE"/>
    <property type="match status" value="1"/>
</dbReference>
<dbReference type="Pfam" id="PF03309">
    <property type="entry name" value="Pan_kinase"/>
    <property type="match status" value="1"/>
</dbReference>
<dbReference type="SUPFAM" id="SSF53067">
    <property type="entry name" value="Actin-like ATPase domain"/>
    <property type="match status" value="2"/>
</dbReference>
<name>COAX_ANADE</name>
<evidence type="ECO:0000255" key="1">
    <source>
        <dbReference type="HAMAP-Rule" id="MF_01274"/>
    </source>
</evidence>
<comment type="function">
    <text evidence="1">Catalyzes the phosphorylation of pantothenate (Pan), the first step in CoA biosynthesis.</text>
</comment>
<comment type="catalytic activity">
    <reaction evidence="1">
        <text>(R)-pantothenate + ATP = (R)-4'-phosphopantothenate + ADP + H(+)</text>
        <dbReference type="Rhea" id="RHEA:16373"/>
        <dbReference type="ChEBI" id="CHEBI:10986"/>
        <dbReference type="ChEBI" id="CHEBI:15378"/>
        <dbReference type="ChEBI" id="CHEBI:29032"/>
        <dbReference type="ChEBI" id="CHEBI:30616"/>
        <dbReference type="ChEBI" id="CHEBI:456216"/>
        <dbReference type="EC" id="2.7.1.33"/>
    </reaction>
</comment>
<comment type="cofactor">
    <cofactor evidence="1">
        <name>NH4(+)</name>
        <dbReference type="ChEBI" id="CHEBI:28938"/>
    </cofactor>
    <cofactor evidence="1">
        <name>K(+)</name>
        <dbReference type="ChEBI" id="CHEBI:29103"/>
    </cofactor>
    <text evidence="1">A monovalent cation. Ammonium or potassium.</text>
</comment>
<comment type="pathway">
    <text evidence="1">Cofactor biosynthesis; coenzyme A biosynthesis; CoA from (R)-pantothenate: step 1/5.</text>
</comment>
<comment type="subunit">
    <text evidence="1">Homodimer.</text>
</comment>
<comment type="subcellular location">
    <subcellularLocation>
        <location evidence="1">Cytoplasm</location>
    </subcellularLocation>
</comment>
<comment type="similarity">
    <text evidence="1">Belongs to the type III pantothenate kinase family.</text>
</comment>
<reference key="1">
    <citation type="submission" date="2006-01" db="EMBL/GenBank/DDBJ databases">
        <title>Complete sequence of Anaeromyxobacter dehalogenans 2CP-C.</title>
        <authorList>
            <person name="Copeland A."/>
            <person name="Lucas S."/>
            <person name="Lapidus A."/>
            <person name="Barry K."/>
            <person name="Detter J.C."/>
            <person name="Glavina T."/>
            <person name="Hammon N."/>
            <person name="Israni S."/>
            <person name="Pitluck S."/>
            <person name="Brettin T."/>
            <person name="Bruce D."/>
            <person name="Han C."/>
            <person name="Tapia R."/>
            <person name="Gilna P."/>
            <person name="Kiss H."/>
            <person name="Schmutz J."/>
            <person name="Larimer F."/>
            <person name="Land M."/>
            <person name="Kyrpides N."/>
            <person name="Anderson I."/>
            <person name="Sanford R.A."/>
            <person name="Ritalahti K.M."/>
            <person name="Thomas H.S."/>
            <person name="Kirby J.R."/>
            <person name="Zhulin I.B."/>
            <person name="Loeffler F.E."/>
            <person name="Richardson P."/>
        </authorList>
    </citation>
    <scope>NUCLEOTIDE SEQUENCE [LARGE SCALE GENOMIC DNA]</scope>
    <source>
        <strain>2CP-C</strain>
    </source>
</reference>
<sequence>MLLAIDVGNTNTTLGVYEGAVLRKHWRVETSHTRTYDEYGILLRQLFASAGLEPARVSSVVIASVVPPLAFTLEQMCVRYFDRKPMFVGPGMKTGMPILYENPREVGADRVVNAVAAFERWRCALVVVDFGTATTFDVISAKGEYLGGAICPGIGISMDALARSASKLPRVEFAKPPSVVGKNTVASIQAGLVYGYVGMVDGICAQIAAELATPPKVVATGGLAPLIAGVSRSITEVDEHLTLEGLRILHERNR</sequence>
<proteinExistence type="inferred from homology"/>
<keyword id="KW-0067">ATP-binding</keyword>
<keyword id="KW-0173">Coenzyme A biosynthesis</keyword>
<keyword id="KW-0963">Cytoplasm</keyword>
<keyword id="KW-0418">Kinase</keyword>
<keyword id="KW-0479">Metal-binding</keyword>
<keyword id="KW-0547">Nucleotide-binding</keyword>
<keyword id="KW-0630">Potassium</keyword>
<keyword id="KW-1185">Reference proteome</keyword>
<keyword id="KW-0808">Transferase</keyword>
<accession>Q2IKH9</accession>
<gene>
    <name evidence="1" type="primary">coaX</name>
    <name type="ordered locus">Adeh_2387</name>
</gene>
<organism>
    <name type="scientific">Anaeromyxobacter dehalogenans (strain 2CP-C)</name>
    <dbReference type="NCBI Taxonomy" id="290397"/>
    <lineage>
        <taxon>Bacteria</taxon>
        <taxon>Pseudomonadati</taxon>
        <taxon>Myxococcota</taxon>
        <taxon>Myxococcia</taxon>
        <taxon>Myxococcales</taxon>
        <taxon>Cystobacterineae</taxon>
        <taxon>Anaeromyxobacteraceae</taxon>
        <taxon>Anaeromyxobacter</taxon>
    </lineage>
</organism>
<feature type="chain" id="PRO_0000267488" description="Type III pantothenate kinase">
    <location>
        <begin position="1"/>
        <end position="254"/>
    </location>
</feature>
<feature type="active site" description="Proton acceptor" evidence="1">
    <location>
        <position position="109"/>
    </location>
</feature>
<feature type="binding site" evidence="1">
    <location>
        <begin position="6"/>
        <end position="13"/>
    </location>
    <ligand>
        <name>ATP</name>
        <dbReference type="ChEBI" id="CHEBI:30616"/>
    </ligand>
</feature>
<feature type="binding site" evidence="1">
    <location>
        <position position="100"/>
    </location>
    <ligand>
        <name>substrate</name>
    </ligand>
</feature>
<feature type="binding site" evidence="1">
    <location>
        <begin position="107"/>
        <end position="110"/>
    </location>
    <ligand>
        <name>substrate</name>
    </ligand>
</feature>
<feature type="binding site" evidence="1">
    <location>
        <position position="129"/>
    </location>
    <ligand>
        <name>K(+)</name>
        <dbReference type="ChEBI" id="CHEBI:29103"/>
    </ligand>
</feature>
<feature type="binding site" evidence="1">
    <location>
        <position position="132"/>
    </location>
    <ligand>
        <name>ATP</name>
        <dbReference type="ChEBI" id="CHEBI:30616"/>
    </ligand>
</feature>
<feature type="binding site" evidence="1">
    <location>
        <position position="184"/>
    </location>
    <ligand>
        <name>substrate</name>
    </ligand>
</feature>
<protein>
    <recommendedName>
        <fullName evidence="1">Type III pantothenate kinase</fullName>
        <ecNumber evidence="1">2.7.1.33</ecNumber>
    </recommendedName>
    <alternativeName>
        <fullName evidence="1">PanK-III</fullName>
    </alternativeName>
    <alternativeName>
        <fullName evidence="1">Pantothenic acid kinase</fullName>
    </alternativeName>
</protein>